<sequence>MQFIDRAEIEVEGGKGGDGIVAFRREKYVPAGGPAGGNGGKGGSVVLKAEENLQTLLDFRYARRFKADDGKRGGPNNCTGAMGKDTIVEVPCGTVVYDLETEEILGDLVKNGQTLCVAQGGKGGLGNKHFLSNQNRAPEYALPGLEGEHRNLRLELKLLAEVGIIGLPNAGKSTLIASLSAARPKIADYPFTTLVPNLGVVRKPTGDGTVFADIPGLIAGAHEGIGLGHEFLRHIERTRLLLHLVDVTSADPIADYEVIQQELTAYGRGLSDRPQIIALNKVDACDQDTLDLIAEELQQLSQSEIFTISAVTKTGVEELLQAIWHRLDQATSNHQDSSLPLV</sequence>
<keyword id="KW-0963">Cytoplasm</keyword>
<keyword id="KW-0342">GTP-binding</keyword>
<keyword id="KW-0378">Hydrolase</keyword>
<keyword id="KW-0460">Magnesium</keyword>
<keyword id="KW-0479">Metal-binding</keyword>
<keyword id="KW-0547">Nucleotide-binding</keyword>
<keyword id="KW-1185">Reference proteome</keyword>
<accession>B1X0M2</accession>
<feature type="chain" id="PRO_0000385869" description="GTPase Obg">
    <location>
        <begin position="1"/>
        <end position="342"/>
    </location>
</feature>
<feature type="domain" description="Obg" evidence="2">
    <location>
        <begin position="1"/>
        <end position="159"/>
    </location>
</feature>
<feature type="domain" description="OBG-type G" evidence="1">
    <location>
        <begin position="160"/>
        <end position="328"/>
    </location>
</feature>
<feature type="binding site" evidence="1">
    <location>
        <begin position="166"/>
        <end position="173"/>
    </location>
    <ligand>
        <name>GTP</name>
        <dbReference type="ChEBI" id="CHEBI:37565"/>
    </ligand>
</feature>
<feature type="binding site" evidence="1">
    <location>
        <position position="173"/>
    </location>
    <ligand>
        <name>Mg(2+)</name>
        <dbReference type="ChEBI" id="CHEBI:18420"/>
    </ligand>
</feature>
<feature type="binding site" evidence="1">
    <location>
        <begin position="191"/>
        <end position="195"/>
    </location>
    <ligand>
        <name>GTP</name>
        <dbReference type="ChEBI" id="CHEBI:37565"/>
    </ligand>
</feature>
<feature type="binding site" evidence="1">
    <location>
        <position position="193"/>
    </location>
    <ligand>
        <name>Mg(2+)</name>
        <dbReference type="ChEBI" id="CHEBI:18420"/>
    </ligand>
</feature>
<feature type="binding site" evidence="1">
    <location>
        <begin position="213"/>
        <end position="216"/>
    </location>
    <ligand>
        <name>GTP</name>
        <dbReference type="ChEBI" id="CHEBI:37565"/>
    </ligand>
</feature>
<feature type="binding site" evidence="1">
    <location>
        <begin position="280"/>
        <end position="283"/>
    </location>
    <ligand>
        <name>GTP</name>
        <dbReference type="ChEBI" id="CHEBI:37565"/>
    </ligand>
</feature>
<feature type="binding site" evidence="1">
    <location>
        <begin position="309"/>
        <end position="311"/>
    </location>
    <ligand>
        <name>GTP</name>
        <dbReference type="ChEBI" id="CHEBI:37565"/>
    </ligand>
</feature>
<protein>
    <recommendedName>
        <fullName evidence="1">GTPase Obg</fullName>
        <ecNumber evidence="1">3.6.5.-</ecNumber>
    </recommendedName>
    <alternativeName>
        <fullName evidence="1">GTP-binding protein Obg</fullName>
    </alternativeName>
</protein>
<dbReference type="EC" id="3.6.5.-" evidence="1"/>
<dbReference type="EMBL" id="CP000806">
    <property type="protein sequence ID" value="ACB51311.1"/>
    <property type="molecule type" value="Genomic_DNA"/>
</dbReference>
<dbReference type="RefSeq" id="WP_009545764.1">
    <property type="nucleotide sequence ID" value="NC_010546.1"/>
</dbReference>
<dbReference type="SMR" id="B1X0M2"/>
<dbReference type="STRING" id="43989.cce_1961"/>
<dbReference type="KEGG" id="cyt:cce_1961"/>
<dbReference type="eggNOG" id="COG0536">
    <property type="taxonomic scope" value="Bacteria"/>
</dbReference>
<dbReference type="HOGENOM" id="CLU_011747_2_0_3"/>
<dbReference type="OrthoDB" id="9807318at2"/>
<dbReference type="Proteomes" id="UP000001203">
    <property type="component" value="Chromosome circular"/>
</dbReference>
<dbReference type="GO" id="GO:0005737">
    <property type="term" value="C:cytoplasm"/>
    <property type="evidence" value="ECO:0007669"/>
    <property type="project" value="UniProtKB-SubCell"/>
</dbReference>
<dbReference type="GO" id="GO:0005525">
    <property type="term" value="F:GTP binding"/>
    <property type="evidence" value="ECO:0007669"/>
    <property type="project" value="UniProtKB-UniRule"/>
</dbReference>
<dbReference type="GO" id="GO:0003924">
    <property type="term" value="F:GTPase activity"/>
    <property type="evidence" value="ECO:0007669"/>
    <property type="project" value="UniProtKB-UniRule"/>
</dbReference>
<dbReference type="GO" id="GO:0000287">
    <property type="term" value="F:magnesium ion binding"/>
    <property type="evidence" value="ECO:0007669"/>
    <property type="project" value="InterPro"/>
</dbReference>
<dbReference type="GO" id="GO:0042254">
    <property type="term" value="P:ribosome biogenesis"/>
    <property type="evidence" value="ECO:0007669"/>
    <property type="project" value="UniProtKB-UniRule"/>
</dbReference>
<dbReference type="CDD" id="cd01898">
    <property type="entry name" value="Obg"/>
    <property type="match status" value="1"/>
</dbReference>
<dbReference type="FunFam" id="2.70.210.12:FF:000001">
    <property type="entry name" value="GTPase Obg"/>
    <property type="match status" value="1"/>
</dbReference>
<dbReference type="Gene3D" id="2.70.210.12">
    <property type="entry name" value="GTP1/OBG domain"/>
    <property type="match status" value="1"/>
</dbReference>
<dbReference type="Gene3D" id="3.40.50.300">
    <property type="entry name" value="P-loop containing nucleotide triphosphate hydrolases"/>
    <property type="match status" value="1"/>
</dbReference>
<dbReference type="HAMAP" id="MF_01454">
    <property type="entry name" value="GTPase_Obg"/>
    <property type="match status" value="1"/>
</dbReference>
<dbReference type="InterPro" id="IPR031167">
    <property type="entry name" value="G_OBG"/>
</dbReference>
<dbReference type="InterPro" id="IPR006073">
    <property type="entry name" value="GTP-bd"/>
</dbReference>
<dbReference type="InterPro" id="IPR014100">
    <property type="entry name" value="GTP-bd_Obg/CgtA"/>
</dbReference>
<dbReference type="InterPro" id="IPR006169">
    <property type="entry name" value="GTP1_OBG_dom"/>
</dbReference>
<dbReference type="InterPro" id="IPR036726">
    <property type="entry name" value="GTP1_OBG_dom_sf"/>
</dbReference>
<dbReference type="InterPro" id="IPR045086">
    <property type="entry name" value="OBG_GTPase"/>
</dbReference>
<dbReference type="InterPro" id="IPR027417">
    <property type="entry name" value="P-loop_NTPase"/>
</dbReference>
<dbReference type="InterPro" id="IPR005225">
    <property type="entry name" value="Small_GTP-bd"/>
</dbReference>
<dbReference type="NCBIfam" id="TIGR02729">
    <property type="entry name" value="Obg_CgtA"/>
    <property type="match status" value="1"/>
</dbReference>
<dbReference type="NCBIfam" id="NF008954">
    <property type="entry name" value="PRK12296.1"/>
    <property type="match status" value="1"/>
</dbReference>
<dbReference type="NCBIfam" id="NF008955">
    <property type="entry name" value="PRK12297.1"/>
    <property type="match status" value="1"/>
</dbReference>
<dbReference type="NCBIfam" id="NF008956">
    <property type="entry name" value="PRK12299.1"/>
    <property type="match status" value="1"/>
</dbReference>
<dbReference type="NCBIfam" id="TIGR00231">
    <property type="entry name" value="small_GTP"/>
    <property type="match status" value="1"/>
</dbReference>
<dbReference type="PANTHER" id="PTHR11702">
    <property type="entry name" value="DEVELOPMENTALLY REGULATED GTP-BINDING PROTEIN-RELATED"/>
    <property type="match status" value="1"/>
</dbReference>
<dbReference type="PANTHER" id="PTHR11702:SF31">
    <property type="entry name" value="MITOCHONDRIAL RIBOSOME-ASSOCIATED GTPASE 2"/>
    <property type="match status" value="1"/>
</dbReference>
<dbReference type="Pfam" id="PF01018">
    <property type="entry name" value="GTP1_OBG"/>
    <property type="match status" value="1"/>
</dbReference>
<dbReference type="Pfam" id="PF01926">
    <property type="entry name" value="MMR_HSR1"/>
    <property type="match status" value="1"/>
</dbReference>
<dbReference type="PIRSF" id="PIRSF002401">
    <property type="entry name" value="GTP_bd_Obg/CgtA"/>
    <property type="match status" value="1"/>
</dbReference>
<dbReference type="PRINTS" id="PR00326">
    <property type="entry name" value="GTP1OBG"/>
</dbReference>
<dbReference type="SUPFAM" id="SSF82051">
    <property type="entry name" value="Obg GTP-binding protein N-terminal domain"/>
    <property type="match status" value="1"/>
</dbReference>
<dbReference type="SUPFAM" id="SSF52540">
    <property type="entry name" value="P-loop containing nucleoside triphosphate hydrolases"/>
    <property type="match status" value="1"/>
</dbReference>
<dbReference type="PROSITE" id="PS51710">
    <property type="entry name" value="G_OBG"/>
    <property type="match status" value="1"/>
</dbReference>
<dbReference type="PROSITE" id="PS51883">
    <property type="entry name" value="OBG"/>
    <property type="match status" value="1"/>
</dbReference>
<evidence type="ECO:0000255" key="1">
    <source>
        <dbReference type="HAMAP-Rule" id="MF_01454"/>
    </source>
</evidence>
<evidence type="ECO:0000255" key="2">
    <source>
        <dbReference type="PROSITE-ProRule" id="PRU01231"/>
    </source>
</evidence>
<comment type="function">
    <text evidence="1">An essential GTPase which binds GTP, GDP and possibly (p)ppGpp with moderate affinity, with high nucleotide exchange rates and a fairly low GTP hydrolysis rate. Plays a role in control of the cell cycle, stress response, ribosome biogenesis and in those bacteria that undergo differentiation, in morphogenesis control.</text>
</comment>
<comment type="cofactor">
    <cofactor evidence="1">
        <name>Mg(2+)</name>
        <dbReference type="ChEBI" id="CHEBI:18420"/>
    </cofactor>
</comment>
<comment type="subunit">
    <text evidence="1">Monomer.</text>
</comment>
<comment type="subcellular location">
    <subcellularLocation>
        <location evidence="1">Cytoplasm</location>
    </subcellularLocation>
</comment>
<comment type="similarity">
    <text evidence="1">Belongs to the TRAFAC class OBG-HflX-like GTPase superfamily. OBG GTPase family.</text>
</comment>
<name>OBG_CROS5</name>
<organism>
    <name type="scientific">Crocosphaera subtropica (strain ATCC 51142 / BH68)</name>
    <name type="common">Cyanothece sp. (strain ATCC 51142)</name>
    <dbReference type="NCBI Taxonomy" id="43989"/>
    <lineage>
        <taxon>Bacteria</taxon>
        <taxon>Bacillati</taxon>
        <taxon>Cyanobacteriota</taxon>
        <taxon>Cyanophyceae</taxon>
        <taxon>Oscillatoriophycideae</taxon>
        <taxon>Chroococcales</taxon>
        <taxon>Aphanothecaceae</taxon>
        <taxon>Crocosphaera</taxon>
        <taxon>Crocosphaera subtropica</taxon>
    </lineage>
</organism>
<gene>
    <name evidence="1" type="primary">obg</name>
    <name type="ordered locus">cce_1961</name>
</gene>
<reference key="1">
    <citation type="journal article" date="2008" name="Proc. Natl. Acad. Sci. U.S.A.">
        <title>The genome of Cyanothece 51142, a unicellular diazotrophic cyanobacterium important in the marine nitrogen cycle.</title>
        <authorList>
            <person name="Welsh E.A."/>
            <person name="Liberton M."/>
            <person name="Stoeckel J."/>
            <person name="Loh T."/>
            <person name="Elvitigala T."/>
            <person name="Wang C."/>
            <person name="Wollam A."/>
            <person name="Fulton R.S."/>
            <person name="Clifton S.W."/>
            <person name="Jacobs J.M."/>
            <person name="Aurora R."/>
            <person name="Ghosh B.K."/>
            <person name="Sherman L.A."/>
            <person name="Smith R.D."/>
            <person name="Wilson R.K."/>
            <person name="Pakrasi H.B."/>
        </authorList>
    </citation>
    <scope>NUCLEOTIDE SEQUENCE [LARGE SCALE GENOMIC DNA]</scope>
    <source>
        <strain>ATCC 51142 / BH68</strain>
    </source>
</reference>
<proteinExistence type="inferred from homology"/>